<feature type="chain" id="PRO_0000067834" description="DNA-directed RNA polymerase subunit beta'">
    <location>
        <begin position="1"/>
        <end position="1404"/>
    </location>
</feature>
<feature type="binding site" evidence="1">
    <location>
        <position position="70"/>
    </location>
    <ligand>
        <name>Zn(2+)</name>
        <dbReference type="ChEBI" id="CHEBI:29105"/>
        <label>1</label>
    </ligand>
</feature>
<feature type="binding site" evidence="1">
    <location>
        <position position="72"/>
    </location>
    <ligand>
        <name>Zn(2+)</name>
        <dbReference type="ChEBI" id="CHEBI:29105"/>
        <label>1</label>
    </ligand>
</feature>
<feature type="binding site" evidence="1">
    <location>
        <position position="85"/>
    </location>
    <ligand>
        <name>Zn(2+)</name>
        <dbReference type="ChEBI" id="CHEBI:29105"/>
        <label>1</label>
    </ligand>
</feature>
<feature type="binding site" evidence="1">
    <location>
        <position position="88"/>
    </location>
    <ligand>
        <name>Zn(2+)</name>
        <dbReference type="ChEBI" id="CHEBI:29105"/>
        <label>1</label>
    </ligand>
</feature>
<feature type="binding site" evidence="1">
    <location>
        <position position="460"/>
    </location>
    <ligand>
        <name>Mg(2+)</name>
        <dbReference type="ChEBI" id="CHEBI:18420"/>
    </ligand>
</feature>
<feature type="binding site" evidence="1">
    <location>
        <position position="462"/>
    </location>
    <ligand>
        <name>Mg(2+)</name>
        <dbReference type="ChEBI" id="CHEBI:18420"/>
    </ligand>
</feature>
<feature type="binding site" evidence="1">
    <location>
        <position position="464"/>
    </location>
    <ligand>
        <name>Mg(2+)</name>
        <dbReference type="ChEBI" id="CHEBI:18420"/>
    </ligand>
</feature>
<feature type="binding site" evidence="1">
    <location>
        <position position="814"/>
    </location>
    <ligand>
        <name>Zn(2+)</name>
        <dbReference type="ChEBI" id="CHEBI:29105"/>
        <label>2</label>
    </ligand>
</feature>
<feature type="binding site" evidence="1">
    <location>
        <position position="889"/>
    </location>
    <ligand>
        <name>Zn(2+)</name>
        <dbReference type="ChEBI" id="CHEBI:29105"/>
        <label>2</label>
    </ligand>
</feature>
<feature type="binding site" evidence="1">
    <location>
        <position position="896"/>
    </location>
    <ligand>
        <name>Zn(2+)</name>
        <dbReference type="ChEBI" id="CHEBI:29105"/>
        <label>2</label>
    </ligand>
</feature>
<feature type="binding site" evidence="1">
    <location>
        <position position="899"/>
    </location>
    <ligand>
        <name>Zn(2+)</name>
        <dbReference type="ChEBI" id="CHEBI:29105"/>
        <label>2</label>
    </ligand>
</feature>
<comment type="function">
    <text evidence="1">DNA-dependent RNA polymerase catalyzes the transcription of DNA into RNA using the four ribonucleoside triphosphates as substrates.</text>
</comment>
<comment type="catalytic activity">
    <reaction evidence="1">
        <text>RNA(n) + a ribonucleoside 5'-triphosphate = RNA(n+1) + diphosphate</text>
        <dbReference type="Rhea" id="RHEA:21248"/>
        <dbReference type="Rhea" id="RHEA-COMP:14527"/>
        <dbReference type="Rhea" id="RHEA-COMP:17342"/>
        <dbReference type="ChEBI" id="CHEBI:33019"/>
        <dbReference type="ChEBI" id="CHEBI:61557"/>
        <dbReference type="ChEBI" id="CHEBI:140395"/>
        <dbReference type="EC" id="2.7.7.6"/>
    </reaction>
</comment>
<comment type="cofactor">
    <cofactor evidence="1">
        <name>Mg(2+)</name>
        <dbReference type="ChEBI" id="CHEBI:18420"/>
    </cofactor>
    <text evidence="1">Binds 1 Mg(2+) ion per subunit.</text>
</comment>
<comment type="cofactor">
    <cofactor evidence="1">
        <name>Zn(2+)</name>
        <dbReference type="ChEBI" id="CHEBI:29105"/>
    </cofactor>
    <text evidence="1">Binds 2 Zn(2+) ions per subunit.</text>
</comment>
<comment type="subunit">
    <text evidence="1">The RNAP catalytic core consists of 2 alpha, 1 beta, 1 beta' and 1 omega subunit. When a sigma factor is associated with the core the holoenzyme is formed, which can initiate transcription.</text>
</comment>
<comment type="similarity">
    <text evidence="1">Belongs to the RNA polymerase beta' chain family.</text>
</comment>
<reference key="1">
    <citation type="journal article" date="2002" name="Nature">
        <title>Comparison of the genomes of two Xanthomonas pathogens with differing host specificities.</title>
        <authorList>
            <person name="da Silva A.C.R."/>
            <person name="Ferro J.A."/>
            <person name="Reinach F.C."/>
            <person name="Farah C.S."/>
            <person name="Furlan L.R."/>
            <person name="Quaggio R.B."/>
            <person name="Monteiro-Vitorello C.B."/>
            <person name="Van Sluys M.A."/>
            <person name="Almeida N.F. Jr."/>
            <person name="Alves L.M.C."/>
            <person name="do Amaral A.M."/>
            <person name="Bertolini M.C."/>
            <person name="Camargo L.E.A."/>
            <person name="Camarotte G."/>
            <person name="Cannavan F."/>
            <person name="Cardozo J."/>
            <person name="Chambergo F."/>
            <person name="Ciapina L.P."/>
            <person name="Cicarelli R.M.B."/>
            <person name="Coutinho L.L."/>
            <person name="Cursino-Santos J.R."/>
            <person name="El-Dorry H."/>
            <person name="Faria J.B."/>
            <person name="Ferreira A.J.S."/>
            <person name="Ferreira R.C.C."/>
            <person name="Ferro M.I.T."/>
            <person name="Formighieri E.F."/>
            <person name="Franco M.C."/>
            <person name="Greggio C.C."/>
            <person name="Gruber A."/>
            <person name="Katsuyama A.M."/>
            <person name="Kishi L.T."/>
            <person name="Leite R.P."/>
            <person name="Lemos E.G.M."/>
            <person name="Lemos M.V.F."/>
            <person name="Locali E.C."/>
            <person name="Machado M.A."/>
            <person name="Madeira A.M.B.N."/>
            <person name="Martinez-Rossi N.M."/>
            <person name="Martins E.C."/>
            <person name="Meidanis J."/>
            <person name="Menck C.F.M."/>
            <person name="Miyaki C.Y."/>
            <person name="Moon D.H."/>
            <person name="Moreira L.M."/>
            <person name="Novo M.T.M."/>
            <person name="Okura V.K."/>
            <person name="Oliveira M.C."/>
            <person name="Oliveira V.R."/>
            <person name="Pereira H.A."/>
            <person name="Rossi A."/>
            <person name="Sena J.A.D."/>
            <person name="Silva C."/>
            <person name="de Souza R.F."/>
            <person name="Spinola L.A.F."/>
            <person name="Takita M.A."/>
            <person name="Tamura R.E."/>
            <person name="Teixeira E.C."/>
            <person name="Tezza R.I.D."/>
            <person name="Trindade dos Santos M."/>
            <person name="Truffi D."/>
            <person name="Tsai S.M."/>
            <person name="White F.F."/>
            <person name="Setubal J.C."/>
            <person name="Kitajima J.P."/>
        </authorList>
    </citation>
    <scope>NUCLEOTIDE SEQUENCE [LARGE SCALE GENOMIC DNA]</scope>
    <source>
        <strain>306</strain>
    </source>
</reference>
<evidence type="ECO:0000255" key="1">
    <source>
        <dbReference type="HAMAP-Rule" id="MF_01322"/>
    </source>
</evidence>
<organism>
    <name type="scientific">Xanthomonas axonopodis pv. citri (strain 306)</name>
    <dbReference type="NCBI Taxonomy" id="190486"/>
    <lineage>
        <taxon>Bacteria</taxon>
        <taxon>Pseudomonadati</taxon>
        <taxon>Pseudomonadota</taxon>
        <taxon>Gammaproteobacteria</taxon>
        <taxon>Lysobacterales</taxon>
        <taxon>Lysobacteraceae</taxon>
        <taxon>Xanthomonas</taxon>
    </lineage>
</organism>
<proteinExistence type="inferred from homology"/>
<name>RPOC_XANAC</name>
<sequence length="1404" mass="155136">MKDLLNLFNQQRQTLDFDAIKIALASPDLIRSWSYGEVKKPETINYRTFKPERDGLFCAAIFGPIKDYECLCGKYKRMKHRGVVCEKCGTEVTLAKVRRERMGHIDLASPVAHIWFLKSLPSRIGLMLDMTLRDIERVLYFEAYVVTEPGLTPLERRQLLTEEQYLTARQEYNDDFDAAMGAEAVYELLRTIDLQSEMTRLREEIASTGSETKLKRLTKRIKLIEAFLESGNRPEWMVMTVLPVLPPDLRPLVPLDGGRFATSDLNDLYRRVINRNNRLRRLLELNAPDIIVRNEKRMLQESVDALLDNGRRGRAITGTNKRPLKSLADMIKGKQGRFRQNLLGKRVDYSGRSVITVGPYLKLHQCGLPKKMALELFKPFVFAKLQRRGLATTIKAAKKLVEREEAEVWDILEEVIREHPVLLNRAPTLHRLGIQAFEPVLIEGKAIQLHPLVCTAFNADFDGDQMAVHVPLSLEAQLEARALMMSTNNILSPANGEPIIVPSQDVVLGLYYMSRALENKKGEGMVFANTSEVKRAYDNRVVELHAKVKVRITQVDVEAGGKRSSGTSIVDTTVGRALLSEILPEGLPFQLANTEMTKKNISRLINSSYRLLGLKDTVVFADKLMYTGYAYATRAGVSIGIDDMLIPDEKKGILTEAEAEVLEIQEQYQSGLVTAGERYNKVVDIWSRTSERIAKAMMDTIGTEKVENAKGETIDQKSMNSLYIMADSGARGSQAQIRQLAGMRGLMARPDGSIIETPIKANFREGLNVQEYFNSTHGARKGLADTALKTANSGYLTRRLVDVAQDVVITEIDCGTTEGLIMTPIVEGGDVVEPLRERVLGRVVAEDVYLPGNDEEPIVTRNTLLDEAWVAKLEDASVQSVKVRSTISCESSFGVCARCYGRDLARGHQVNIGEAVGVIAAQSIGEPGTQLTMRTFHIGGAASRAAAVDNITVKTTGSVKFNNLKSVAHASGSLVAVSRSGELSVLDGHGRERERYKLPYGATITAKDGDAVKAGQSVANWDPHNHPIVSEVAGFIRFIDFVDGVTVIEKTDELTGLASREITDPKRRGAQAKELRPIVRIVDAKGNDLTIPNTDLPAQYLLPPRSIVNLQDGAAVGVGDVVAKIPQEASKTRDITGGLPRVADLFEARKPKDPAILAERSGIISFGKDTKGKQRLIIKDTDGSEHEELIPKYRQIIVFEGEHVTKGETVVDGEPSPQDILRLLGVEPLAAYLVKEIQDVYRLQGVKINDKHIEVITRQMLRKVEIVDQGNSKFLNGEQVERQRVIEENARLVKRNELPAKYDPVLLGITKASLATESFISAASFQETTRVLTEAAVRGTRDNLRGLKENVIVGRLIPAGTGLAYHAGRRKASGLTDSEMETLSGKPAVAEPVAAVADAGADEE</sequence>
<accession>Q8PNS9</accession>
<protein>
    <recommendedName>
        <fullName evidence="1">DNA-directed RNA polymerase subunit beta'</fullName>
        <shortName evidence="1">RNAP subunit beta'</shortName>
        <ecNumber evidence="1">2.7.7.6</ecNumber>
    </recommendedName>
    <alternativeName>
        <fullName evidence="1">RNA polymerase subunit beta'</fullName>
    </alternativeName>
    <alternativeName>
        <fullName evidence="1">Transcriptase subunit beta'</fullName>
    </alternativeName>
</protein>
<keyword id="KW-0240">DNA-directed RNA polymerase</keyword>
<keyword id="KW-0460">Magnesium</keyword>
<keyword id="KW-0479">Metal-binding</keyword>
<keyword id="KW-0548">Nucleotidyltransferase</keyword>
<keyword id="KW-0804">Transcription</keyword>
<keyword id="KW-0808">Transferase</keyword>
<keyword id="KW-0862">Zinc</keyword>
<dbReference type="EC" id="2.7.7.6" evidence="1"/>
<dbReference type="EMBL" id="AE008923">
    <property type="protein sequence ID" value="AAM35849.1"/>
    <property type="molecule type" value="Genomic_DNA"/>
</dbReference>
<dbReference type="RefSeq" id="WP_003486736.1">
    <property type="nucleotide sequence ID" value="NC_003919.1"/>
</dbReference>
<dbReference type="SMR" id="Q8PNS9"/>
<dbReference type="GeneID" id="66910152"/>
<dbReference type="KEGG" id="xac:XAC0966"/>
<dbReference type="eggNOG" id="COG0086">
    <property type="taxonomic scope" value="Bacteria"/>
</dbReference>
<dbReference type="HOGENOM" id="CLU_000524_3_1_6"/>
<dbReference type="Proteomes" id="UP000000576">
    <property type="component" value="Chromosome"/>
</dbReference>
<dbReference type="GO" id="GO:0000428">
    <property type="term" value="C:DNA-directed RNA polymerase complex"/>
    <property type="evidence" value="ECO:0007669"/>
    <property type="project" value="UniProtKB-KW"/>
</dbReference>
<dbReference type="GO" id="GO:0003677">
    <property type="term" value="F:DNA binding"/>
    <property type="evidence" value="ECO:0007669"/>
    <property type="project" value="UniProtKB-UniRule"/>
</dbReference>
<dbReference type="GO" id="GO:0003899">
    <property type="term" value="F:DNA-directed RNA polymerase activity"/>
    <property type="evidence" value="ECO:0007669"/>
    <property type="project" value="UniProtKB-UniRule"/>
</dbReference>
<dbReference type="GO" id="GO:0000287">
    <property type="term" value="F:magnesium ion binding"/>
    <property type="evidence" value="ECO:0007669"/>
    <property type="project" value="UniProtKB-UniRule"/>
</dbReference>
<dbReference type="GO" id="GO:0008270">
    <property type="term" value="F:zinc ion binding"/>
    <property type="evidence" value="ECO:0007669"/>
    <property type="project" value="UniProtKB-UniRule"/>
</dbReference>
<dbReference type="GO" id="GO:0006351">
    <property type="term" value="P:DNA-templated transcription"/>
    <property type="evidence" value="ECO:0007669"/>
    <property type="project" value="UniProtKB-UniRule"/>
</dbReference>
<dbReference type="CDD" id="cd02655">
    <property type="entry name" value="RNAP_beta'_C"/>
    <property type="match status" value="1"/>
</dbReference>
<dbReference type="CDD" id="cd01609">
    <property type="entry name" value="RNAP_beta'_N"/>
    <property type="match status" value="1"/>
</dbReference>
<dbReference type="FunFam" id="1.10.132.30:FF:000003">
    <property type="entry name" value="DNA-directed RNA polymerase subunit beta"/>
    <property type="match status" value="1"/>
</dbReference>
<dbReference type="FunFam" id="1.10.150.390:FF:000002">
    <property type="entry name" value="DNA-directed RNA polymerase subunit beta"/>
    <property type="match status" value="1"/>
</dbReference>
<dbReference type="Gene3D" id="1.10.132.30">
    <property type="match status" value="1"/>
</dbReference>
<dbReference type="Gene3D" id="1.10.150.390">
    <property type="match status" value="1"/>
</dbReference>
<dbReference type="Gene3D" id="1.10.1790.20">
    <property type="match status" value="1"/>
</dbReference>
<dbReference type="Gene3D" id="1.10.40.90">
    <property type="match status" value="1"/>
</dbReference>
<dbReference type="Gene3D" id="2.40.40.20">
    <property type="match status" value="1"/>
</dbReference>
<dbReference type="Gene3D" id="2.40.50.100">
    <property type="match status" value="3"/>
</dbReference>
<dbReference type="Gene3D" id="4.10.860.120">
    <property type="entry name" value="RNA polymerase II, clamp domain"/>
    <property type="match status" value="1"/>
</dbReference>
<dbReference type="Gene3D" id="1.10.274.100">
    <property type="entry name" value="RNA polymerase Rpb1, domain 3"/>
    <property type="match status" value="1"/>
</dbReference>
<dbReference type="HAMAP" id="MF_01322">
    <property type="entry name" value="RNApol_bact_RpoC"/>
    <property type="match status" value="1"/>
</dbReference>
<dbReference type="InterPro" id="IPR045867">
    <property type="entry name" value="DNA-dir_RpoC_beta_prime"/>
</dbReference>
<dbReference type="InterPro" id="IPR012754">
    <property type="entry name" value="DNA-dir_RpoC_beta_prime_bact"/>
</dbReference>
<dbReference type="InterPro" id="IPR000722">
    <property type="entry name" value="RNA_pol_asu"/>
</dbReference>
<dbReference type="InterPro" id="IPR006592">
    <property type="entry name" value="RNA_pol_N"/>
</dbReference>
<dbReference type="InterPro" id="IPR007080">
    <property type="entry name" value="RNA_pol_Rpb1_1"/>
</dbReference>
<dbReference type="InterPro" id="IPR007066">
    <property type="entry name" value="RNA_pol_Rpb1_3"/>
</dbReference>
<dbReference type="InterPro" id="IPR042102">
    <property type="entry name" value="RNA_pol_Rpb1_3_sf"/>
</dbReference>
<dbReference type="InterPro" id="IPR007083">
    <property type="entry name" value="RNA_pol_Rpb1_4"/>
</dbReference>
<dbReference type="InterPro" id="IPR007081">
    <property type="entry name" value="RNA_pol_Rpb1_5"/>
</dbReference>
<dbReference type="InterPro" id="IPR044893">
    <property type="entry name" value="RNA_pol_Rpb1_clamp_domain"/>
</dbReference>
<dbReference type="InterPro" id="IPR038120">
    <property type="entry name" value="Rpb1_funnel_sf"/>
</dbReference>
<dbReference type="NCBIfam" id="TIGR02386">
    <property type="entry name" value="rpoC_TIGR"/>
    <property type="match status" value="1"/>
</dbReference>
<dbReference type="PANTHER" id="PTHR19376">
    <property type="entry name" value="DNA-DIRECTED RNA POLYMERASE"/>
    <property type="match status" value="1"/>
</dbReference>
<dbReference type="PANTHER" id="PTHR19376:SF54">
    <property type="entry name" value="DNA-DIRECTED RNA POLYMERASE SUBUNIT BETA"/>
    <property type="match status" value="1"/>
</dbReference>
<dbReference type="Pfam" id="PF04997">
    <property type="entry name" value="RNA_pol_Rpb1_1"/>
    <property type="match status" value="1"/>
</dbReference>
<dbReference type="Pfam" id="PF00623">
    <property type="entry name" value="RNA_pol_Rpb1_2"/>
    <property type="match status" value="2"/>
</dbReference>
<dbReference type="Pfam" id="PF04983">
    <property type="entry name" value="RNA_pol_Rpb1_3"/>
    <property type="match status" value="1"/>
</dbReference>
<dbReference type="Pfam" id="PF05000">
    <property type="entry name" value="RNA_pol_Rpb1_4"/>
    <property type="match status" value="1"/>
</dbReference>
<dbReference type="Pfam" id="PF04998">
    <property type="entry name" value="RNA_pol_Rpb1_5"/>
    <property type="match status" value="1"/>
</dbReference>
<dbReference type="SMART" id="SM00663">
    <property type="entry name" value="RPOLA_N"/>
    <property type="match status" value="1"/>
</dbReference>
<dbReference type="SUPFAM" id="SSF64484">
    <property type="entry name" value="beta and beta-prime subunits of DNA dependent RNA-polymerase"/>
    <property type="match status" value="1"/>
</dbReference>
<gene>
    <name evidence="1" type="primary">rpoC</name>
    <name type="ordered locus">XAC0966</name>
</gene>